<name>ATPD_RHOPA</name>
<dbReference type="EMBL" id="BX572593">
    <property type="protein sequence ID" value="CAE25623.1"/>
    <property type="molecule type" value="Genomic_DNA"/>
</dbReference>
<dbReference type="RefSeq" id="WP_011155747.1">
    <property type="nucleotide sequence ID" value="NZ_CP116810.1"/>
</dbReference>
<dbReference type="SMR" id="Q6NDC9"/>
<dbReference type="STRING" id="258594.RPA0179"/>
<dbReference type="DNASU" id="2689332"/>
<dbReference type="GeneID" id="66891184"/>
<dbReference type="eggNOG" id="COG0712">
    <property type="taxonomic scope" value="Bacteria"/>
</dbReference>
<dbReference type="HOGENOM" id="CLU_085114_0_1_5"/>
<dbReference type="PhylomeDB" id="Q6NDC9"/>
<dbReference type="GO" id="GO:0005886">
    <property type="term" value="C:plasma membrane"/>
    <property type="evidence" value="ECO:0007669"/>
    <property type="project" value="UniProtKB-SubCell"/>
</dbReference>
<dbReference type="GO" id="GO:0045259">
    <property type="term" value="C:proton-transporting ATP synthase complex"/>
    <property type="evidence" value="ECO:0007669"/>
    <property type="project" value="UniProtKB-KW"/>
</dbReference>
<dbReference type="GO" id="GO:0046933">
    <property type="term" value="F:proton-transporting ATP synthase activity, rotational mechanism"/>
    <property type="evidence" value="ECO:0007669"/>
    <property type="project" value="UniProtKB-UniRule"/>
</dbReference>
<dbReference type="Gene3D" id="1.10.520.20">
    <property type="entry name" value="N-terminal domain of the delta subunit of the F1F0-ATP synthase"/>
    <property type="match status" value="1"/>
</dbReference>
<dbReference type="HAMAP" id="MF_01416">
    <property type="entry name" value="ATP_synth_delta_bact"/>
    <property type="match status" value="1"/>
</dbReference>
<dbReference type="InterPro" id="IPR026015">
    <property type="entry name" value="ATP_synth_OSCP/delta_N_sf"/>
</dbReference>
<dbReference type="InterPro" id="IPR020781">
    <property type="entry name" value="ATPase_OSCP/d_CS"/>
</dbReference>
<dbReference type="InterPro" id="IPR000711">
    <property type="entry name" value="ATPase_OSCP/dsu"/>
</dbReference>
<dbReference type="NCBIfam" id="TIGR01145">
    <property type="entry name" value="ATP_synt_delta"/>
    <property type="match status" value="1"/>
</dbReference>
<dbReference type="NCBIfam" id="NF004406">
    <property type="entry name" value="PRK05758.3-2"/>
    <property type="match status" value="1"/>
</dbReference>
<dbReference type="PANTHER" id="PTHR11910">
    <property type="entry name" value="ATP SYNTHASE DELTA CHAIN"/>
    <property type="match status" value="1"/>
</dbReference>
<dbReference type="Pfam" id="PF00213">
    <property type="entry name" value="OSCP"/>
    <property type="match status" value="1"/>
</dbReference>
<dbReference type="PRINTS" id="PR00125">
    <property type="entry name" value="ATPASEDELTA"/>
</dbReference>
<dbReference type="SUPFAM" id="SSF47928">
    <property type="entry name" value="N-terminal domain of the delta subunit of the F1F0-ATP synthase"/>
    <property type="match status" value="1"/>
</dbReference>
<dbReference type="PROSITE" id="PS00389">
    <property type="entry name" value="ATPASE_DELTA"/>
    <property type="match status" value="1"/>
</dbReference>
<gene>
    <name evidence="1" type="primary">atpH</name>
    <name type="ordered locus">RPA0179</name>
</gene>
<feature type="chain" id="PRO_1000184781" description="ATP synthase subunit delta">
    <location>
        <begin position="1"/>
        <end position="186"/>
    </location>
</feature>
<reference key="1">
    <citation type="journal article" date="2004" name="Nat. Biotechnol.">
        <title>Complete genome sequence of the metabolically versatile photosynthetic bacterium Rhodopseudomonas palustris.</title>
        <authorList>
            <person name="Larimer F.W."/>
            <person name="Chain P."/>
            <person name="Hauser L."/>
            <person name="Lamerdin J.E."/>
            <person name="Malfatti S."/>
            <person name="Do L."/>
            <person name="Land M.L."/>
            <person name="Pelletier D.A."/>
            <person name="Beatty J.T."/>
            <person name="Lang A.S."/>
            <person name="Tabita F.R."/>
            <person name="Gibson J.L."/>
            <person name="Hanson T.E."/>
            <person name="Bobst C."/>
            <person name="Torres y Torres J.L."/>
            <person name="Peres C."/>
            <person name="Harrison F.H."/>
            <person name="Gibson J."/>
            <person name="Harwood C.S."/>
        </authorList>
    </citation>
    <scope>NUCLEOTIDE SEQUENCE [LARGE SCALE GENOMIC DNA]</scope>
    <source>
        <strain>ATCC BAA-98 / CGA009</strain>
    </source>
</reference>
<accession>Q6NDC9</accession>
<protein>
    <recommendedName>
        <fullName evidence="1">ATP synthase subunit delta</fullName>
    </recommendedName>
    <alternativeName>
        <fullName evidence="1">ATP synthase F(1) sector subunit delta</fullName>
    </alternativeName>
    <alternativeName>
        <fullName evidence="1">F-type ATPase subunit delta</fullName>
        <shortName evidence="1">F-ATPase subunit delta</shortName>
    </alternativeName>
</protein>
<proteinExistence type="inferred from homology"/>
<sequence length="186" mass="19514">MASEDPSVSGVSGRYATALFELARDEKSIDAVTADLDKFSAMLAGSPDLVRLVRSPVFASEVQGKALAAVLDKAGITGISANFLKVLAANRRLFVVADVIRAYRALVAKFKGEATADVTVAEKLSDKNLEALKAALKSVTGKDVALNINVDPAIIGGLVVKLGSRMVDSSLRTKLNSIKHAMKEAG</sequence>
<comment type="function">
    <text evidence="1">F(1)F(0) ATP synthase produces ATP from ADP in the presence of a proton or sodium gradient. F-type ATPases consist of two structural domains, F(1) containing the extramembraneous catalytic core and F(0) containing the membrane proton channel, linked together by a central stalk and a peripheral stalk. During catalysis, ATP synthesis in the catalytic domain of F(1) is coupled via a rotary mechanism of the central stalk subunits to proton translocation.</text>
</comment>
<comment type="function">
    <text evidence="1">This protein is part of the stalk that links CF(0) to CF(1). It either transmits conformational changes from CF(0) to CF(1) or is implicated in proton conduction.</text>
</comment>
<comment type="subunit">
    <text evidence="1">F-type ATPases have 2 components, F(1) - the catalytic core - and F(0) - the membrane proton channel. F(1) has five subunits: alpha(3), beta(3), gamma(1), delta(1), epsilon(1). CF(0) has four main subunits: a(1), b(1), b'(1) and c(10-14). The alpha and beta chains form an alternating ring which encloses part of the gamma chain. F(1) is attached to F(0) by a central stalk formed by the gamma and epsilon chains, while a peripheral stalk is formed by the delta, b and b' chains.</text>
</comment>
<comment type="subcellular location">
    <subcellularLocation>
        <location evidence="1">Cell inner membrane</location>
        <topology evidence="1">Peripheral membrane protein</topology>
    </subcellularLocation>
</comment>
<comment type="similarity">
    <text evidence="1">Belongs to the ATPase delta chain family.</text>
</comment>
<evidence type="ECO:0000255" key="1">
    <source>
        <dbReference type="HAMAP-Rule" id="MF_01416"/>
    </source>
</evidence>
<keyword id="KW-0066">ATP synthesis</keyword>
<keyword id="KW-0997">Cell inner membrane</keyword>
<keyword id="KW-1003">Cell membrane</keyword>
<keyword id="KW-0139">CF(1)</keyword>
<keyword id="KW-0375">Hydrogen ion transport</keyword>
<keyword id="KW-0406">Ion transport</keyword>
<keyword id="KW-0472">Membrane</keyword>
<keyword id="KW-0813">Transport</keyword>
<organism>
    <name type="scientific">Rhodopseudomonas palustris (strain ATCC BAA-98 / CGA009)</name>
    <dbReference type="NCBI Taxonomy" id="258594"/>
    <lineage>
        <taxon>Bacteria</taxon>
        <taxon>Pseudomonadati</taxon>
        <taxon>Pseudomonadota</taxon>
        <taxon>Alphaproteobacteria</taxon>
        <taxon>Hyphomicrobiales</taxon>
        <taxon>Nitrobacteraceae</taxon>
        <taxon>Rhodopseudomonas</taxon>
    </lineage>
</organism>